<accession>Q31ZM7</accession>
<keyword id="KW-0050">Antiport</keyword>
<keyword id="KW-0997">Cell inner membrane</keyword>
<keyword id="KW-1003">Cell membrane</keyword>
<keyword id="KW-0406">Ion transport</keyword>
<keyword id="KW-0472">Membrane</keyword>
<keyword id="KW-0915">Sodium</keyword>
<keyword id="KW-0739">Sodium transport</keyword>
<keyword id="KW-0812">Transmembrane</keyword>
<keyword id="KW-1133">Transmembrane helix</keyword>
<keyword id="KW-0813">Transport</keyword>
<dbReference type="EMBL" id="CP000036">
    <property type="protein sequence ID" value="ABB66481.1"/>
    <property type="molecule type" value="Genomic_DNA"/>
</dbReference>
<dbReference type="RefSeq" id="WP_000406391.1">
    <property type="nucleotide sequence ID" value="NC_007613.1"/>
</dbReference>
<dbReference type="SMR" id="Q31ZM7"/>
<dbReference type="GeneID" id="75203299"/>
<dbReference type="KEGG" id="sbo:SBO_1886"/>
<dbReference type="HOGENOM" id="CLU_041110_0_0_6"/>
<dbReference type="Proteomes" id="UP000007067">
    <property type="component" value="Chromosome"/>
</dbReference>
<dbReference type="GO" id="GO:0005886">
    <property type="term" value="C:plasma membrane"/>
    <property type="evidence" value="ECO:0007669"/>
    <property type="project" value="UniProtKB-SubCell"/>
</dbReference>
<dbReference type="GO" id="GO:0015385">
    <property type="term" value="F:sodium:proton antiporter activity"/>
    <property type="evidence" value="ECO:0007669"/>
    <property type="project" value="InterPro"/>
</dbReference>
<dbReference type="HAMAP" id="MF_01599">
    <property type="entry name" value="NhaB"/>
    <property type="match status" value="1"/>
</dbReference>
<dbReference type="InterPro" id="IPR004671">
    <property type="entry name" value="Na+/H+_antiporter_NhaB"/>
</dbReference>
<dbReference type="NCBIfam" id="TIGR00774">
    <property type="entry name" value="NhaB"/>
    <property type="match status" value="1"/>
</dbReference>
<dbReference type="NCBIfam" id="NF007093">
    <property type="entry name" value="PRK09547.1"/>
    <property type="match status" value="1"/>
</dbReference>
<dbReference type="PANTHER" id="PTHR43302:SF1">
    <property type="entry name" value="NA(+)_H(+) ANTIPORTER NHAB"/>
    <property type="match status" value="1"/>
</dbReference>
<dbReference type="PANTHER" id="PTHR43302">
    <property type="entry name" value="TRANSPORTER ARSB-RELATED"/>
    <property type="match status" value="1"/>
</dbReference>
<dbReference type="Pfam" id="PF06450">
    <property type="entry name" value="NhaB"/>
    <property type="match status" value="1"/>
</dbReference>
<comment type="function">
    <text evidence="1">Na(+)/H(+) antiporter that extrudes sodium in exchange for external protons.</text>
</comment>
<comment type="catalytic activity">
    <reaction evidence="1">
        <text>2 Na(+)(in) + 3 H(+)(out) = 2 Na(+)(out) + 3 H(+)(in)</text>
        <dbReference type="Rhea" id="RHEA:29247"/>
        <dbReference type="ChEBI" id="CHEBI:15378"/>
        <dbReference type="ChEBI" id="CHEBI:29101"/>
    </reaction>
    <physiologicalReaction direction="left-to-right" evidence="1">
        <dbReference type="Rhea" id="RHEA:29248"/>
    </physiologicalReaction>
</comment>
<comment type="subcellular location">
    <subcellularLocation>
        <location evidence="1">Cell inner membrane</location>
        <topology evidence="1">Multi-pass membrane protein</topology>
    </subcellularLocation>
</comment>
<comment type="similarity">
    <text evidence="1">Belongs to the NhaB Na(+)/H(+) (TC 2.A.34) antiporter family.</text>
</comment>
<reference key="1">
    <citation type="journal article" date="2005" name="Nucleic Acids Res.">
        <title>Genome dynamics and diversity of Shigella species, the etiologic agents of bacillary dysentery.</title>
        <authorList>
            <person name="Yang F."/>
            <person name="Yang J."/>
            <person name="Zhang X."/>
            <person name="Chen L."/>
            <person name="Jiang Y."/>
            <person name="Yan Y."/>
            <person name="Tang X."/>
            <person name="Wang J."/>
            <person name="Xiong Z."/>
            <person name="Dong J."/>
            <person name="Xue Y."/>
            <person name="Zhu Y."/>
            <person name="Xu X."/>
            <person name="Sun L."/>
            <person name="Chen S."/>
            <person name="Nie H."/>
            <person name="Peng J."/>
            <person name="Xu J."/>
            <person name="Wang Y."/>
            <person name="Yuan Z."/>
            <person name="Wen Y."/>
            <person name="Yao Z."/>
            <person name="Shen Y."/>
            <person name="Qiang B."/>
            <person name="Hou Y."/>
            <person name="Yu J."/>
            <person name="Jin Q."/>
        </authorList>
    </citation>
    <scope>NUCLEOTIDE SEQUENCE [LARGE SCALE GENOMIC DNA]</scope>
    <source>
        <strain>Sb227</strain>
    </source>
</reference>
<name>NHAB_SHIBS</name>
<sequence length="513" mass="56728">MEISWGRALWRNFLGQSPDWYKLALIIFLIVNPLIFLISPFVAGWLLVAEFIFTLAMALKCYPLLPGGLLAIEAVFIGMTSAEHVREEVAANLEVLLLLMFMVAGIYFMKQLLLFIFTRLLLSIRSKMLLSLSFCVAAAFLSAFLDALTVVAVVISVAVGFYGIYHRVASSRTEDTDLQDDSHIDKHYKVVLEQFRGFLRSLMMHAGVGTALGGVMTMVGEPQNLIIAKAAGWHFGDFFLRMSPVTVPVLICGLLTCLLVEKLRWFGYGETLPEKVREVLQQFDDQSRHQRTRQDKIRLIVQAIIGVWLVTALALHLAEVGLIGLSVIILATSLTGVTDEHAIGKAFTESLPFTALLTVFFSVVAVIIDQQLFSPIIQFVLQASEHAQLSLFYIFNGLLSSISDNVFVGTIYINEAKAAMESGAITLKQYELLAVAINTGTNLPSVATPNGQAAFLFLLTSALAPLIRLSYGRMVWMALPYTLVLTLVGLLCVEFTLAPVTEWFMQMGWIATL</sequence>
<organism>
    <name type="scientific">Shigella boydii serotype 4 (strain Sb227)</name>
    <dbReference type="NCBI Taxonomy" id="300268"/>
    <lineage>
        <taxon>Bacteria</taxon>
        <taxon>Pseudomonadati</taxon>
        <taxon>Pseudomonadota</taxon>
        <taxon>Gammaproteobacteria</taxon>
        <taxon>Enterobacterales</taxon>
        <taxon>Enterobacteriaceae</taxon>
        <taxon>Shigella</taxon>
    </lineage>
</organism>
<gene>
    <name evidence="1" type="primary">nhaB</name>
    <name type="ordered locus">SBO_1886</name>
</gene>
<protein>
    <recommendedName>
        <fullName evidence="1">Na(+)/H(+) antiporter NhaB</fullName>
    </recommendedName>
    <alternativeName>
        <fullName evidence="1">Sodium/proton antiporter NhaB</fullName>
    </alternativeName>
</protein>
<proteinExistence type="inferred from homology"/>
<feature type="chain" id="PRO_0000333139" description="Na(+)/H(+) antiporter NhaB">
    <location>
        <begin position="1"/>
        <end position="513"/>
    </location>
</feature>
<feature type="transmembrane region" description="Helical" evidence="1">
    <location>
        <begin position="23"/>
        <end position="43"/>
    </location>
</feature>
<feature type="transmembrane region" description="Helical" evidence="1">
    <location>
        <begin position="52"/>
        <end position="72"/>
    </location>
</feature>
<feature type="transmembrane region" description="Helical" evidence="1">
    <location>
        <begin position="97"/>
        <end position="117"/>
    </location>
</feature>
<feature type="transmembrane region" description="Helical" evidence="1">
    <location>
        <begin position="120"/>
        <end position="140"/>
    </location>
</feature>
<feature type="transmembrane region" description="Helical" evidence="1">
    <location>
        <begin position="144"/>
        <end position="164"/>
    </location>
</feature>
<feature type="transmembrane region" description="Helical" evidence="1">
    <location>
        <begin position="202"/>
        <end position="222"/>
    </location>
</feature>
<feature type="transmembrane region" description="Helical" evidence="1">
    <location>
        <begin position="238"/>
        <end position="258"/>
    </location>
</feature>
<feature type="transmembrane region" description="Helical" evidence="1">
    <location>
        <begin position="303"/>
        <end position="323"/>
    </location>
</feature>
<feature type="transmembrane region" description="Helical" evidence="1">
    <location>
        <begin position="348"/>
        <end position="368"/>
    </location>
</feature>
<feature type="transmembrane region" description="Helical" evidence="1">
    <location>
        <begin position="391"/>
        <end position="411"/>
    </location>
</feature>
<feature type="transmembrane region" description="Helical" evidence="1">
    <location>
        <begin position="447"/>
        <end position="467"/>
    </location>
</feature>
<feature type="transmembrane region" description="Helical" evidence="1">
    <location>
        <begin position="475"/>
        <end position="495"/>
    </location>
</feature>
<evidence type="ECO:0000255" key="1">
    <source>
        <dbReference type="HAMAP-Rule" id="MF_01599"/>
    </source>
</evidence>